<organism>
    <name type="scientific">Bacillus anthracis</name>
    <dbReference type="NCBI Taxonomy" id="1392"/>
    <lineage>
        <taxon>Bacteria</taxon>
        <taxon>Bacillati</taxon>
        <taxon>Bacillota</taxon>
        <taxon>Bacilli</taxon>
        <taxon>Bacillales</taxon>
        <taxon>Bacillaceae</taxon>
        <taxon>Bacillus</taxon>
        <taxon>Bacillus cereus group</taxon>
    </lineage>
</organism>
<reference key="1">
    <citation type="journal article" date="1999" name="J. Appl. Microbiol.">
        <title>Sequence, assembly and analysis of pXO1 and pXO2.</title>
        <authorList>
            <person name="Okinaka R.T."/>
            <person name="Cloud K."/>
            <person name="Hampton O."/>
            <person name="Hoffmaster A."/>
            <person name="Hill K.K."/>
            <person name="Keim P."/>
            <person name="Koehler T."/>
            <person name="Lamke G."/>
            <person name="Kumano S."/>
            <person name="Manter D."/>
            <person name="Martinez Y."/>
            <person name="Ricke D."/>
            <person name="Svensson R."/>
            <person name="Jackson P.J."/>
        </authorList>
    </citation>
    <scope>NUCLEOTIDE SEQUENCE [GENOMIC DNA]</scope>
    <source>
        <strain>Pasteur</strain>
    </source>
</reference>
<reference key="2">
    <citation type="journal article" date="2002" name="Science">
        <title>Comparative genome sequencing for discovery of novel polymorphisms in Bacillus anthracis.</title>
        <authorList>
            <person name="Read T.D."/>
            <person name="Salzberg S.L."/>
            <person name="Pop M."/>
            <person name="Shumway M.F."/>
            <person name="Umayam L."/>
            <person name="Jiang L."/>
            <person name="Holtzapple E."/>
            <person name="Busch J.D."/>
            <person name="Smith K.L."/>
            <person name="Schupp J.M."/>
            <person name="Solomon D."/>
            <person name="Keim P."/>
            <person name="Fraser C.M."/>
        </authorList>
    </citation>
    <scope>NUCLEOTIDE SEQUENCE [GENOMIC DNA]</scope>
    <source>
        <strain>Ames / isolate Florida / A2012</strain>
    </source>
</reference>
<reference key="3">
    <citation type="journal article" date="2009" name="J. Bacteriol.">
        <title>The complete genome sequence of Bacillus anthracis Ames 'Ancestor'.</title>
        <authorList>
            <person name="Ravel J."/>
            <person name="Jiang L."/>
            <person name="Stanley S.T."/>
            <person name="Wilson M.R."/>
            <person name="Decker R.S."/>
            <person name="Read T.D."/>
            <person name="Worsham P."/>
            <person name="Keim P.S."/>
            <person name="Salzberg S.L."/>
            <person name="Fraser-Liggett C.M."/>
            <person name="Rasko D.A."/>
        </authorList>
    </citation>
    <scope>NUCLEOTIDE SEQUENCE [LARGE SCALE GENOMIC DNA]</scope>
    <source>
        <strain>Ames ancestor</strain>
    </source>
</reference>
<protein>
    <recommendedName>
        <fullName>Uncharacterized protein pXO2-20/BXB0019/GBAA_pXO2_0019</fullName>
    </recommendedName>
</protein>
<name>Y6519_BACAN</name>
<sequence>MLENNVFRLMILMGGVIALIAIITICSDGIPEVEDVFQHFISHKNTKY</sequence>
<evidence type="ECO:0000255" key="1"/>
<dbReference type="EMBL" id="AF188935">
    <property type="protein sequence ID" value="AAF13625.1"/>
    <property type="molecule type" value="Genomic_DNA"/>
</dbReference>
<dbReference type="EMBL" id="AE011191">
    <property type="protein sequence ID" value="AAM26264.1"/>
    <property type="molecule type" value="Genomic_DNA"/>
</dbReference>
<dbReference type="EMBL" id="AE017335">
    <property type="protein sequence ID" value="AAT28949.2"/>
    <property type="molecule type" value="Genomic_DNA"/>
</dbReference>
<dbReference type="RefSeq" id="NP_053175.1">
    <property type="nucleotide sequence ID" value="NC_002146.1"/>
</dbReference>
<dbReference type="RefSeq" id="WP_000892401.1">
    <property type="nucleotide sequence ID" value="NZ_VTZL01000009.1"/>
</dbReference>
<dbReference type="SMR" id="Q9RN12"/>
<dbReference type="GeneID" id="45025774"/>
<dbReference type="KEGG" id="bar:GBAA_pXO2_0019"/>
<dbReference type="PATRIC" id="fig|1392.231.peg.5683"/>
<dbReference type="HOGENOM" id="CLU_216197_0_0_9"/>
<dbReference type="Proteomes" id="UP000000594">
    <property type="component" value="Plasmid pXO2"/>
</dbReference>
<accession>Q9RN12</accession>
<keyword id="KW-0614">Plasmid</keyword>
<keyword id="KW-1185">Reference proteome</keyword>
<keyword id="KW-0732">Signal</keyword>
<feature type="signal peptide" evidence="1">
    <location>
        <begin position="1"/>
        <end position="21"/>
    </location>
</feature>
<feature type="chain" id="PRO_0000013687" description="Uncharacterized protein pXO2-20/BXB0019/GBAA_pXO2_0019">
    <location>
        <begin position="22"/>
        <end position="48"/>
    </location>
</feature>
<proteinExistence type="inferred from homology"/>
<gene>
    <name type="ordered locus">pXO2-20</name>
    <name type="ordered locus">BXB0019</name>
    <name type="ordered locus">GBAA_pXO2_0019</name>
</gene>
<geneLocation type="plasmid">
    <name>pXO2</name>
</geneLocation>